<comment type="function">
    <text evidence="1">The RuvA-RuvB-RuvC complex processes Holliday junction (HJ) DNA during genetic recombination and DNA repair, while the RuvA-RuvB complex plays an important role in the rescue of blocked DNA replication forks via replication fork reversal (RFR). RuvA specifically binds to HJ cruciform DNA, conferring on it an open structure. The RuvB hexamer acts as an ATP-dependent pump, pulling dsDNA into and through the RuvAB complex. RuvB forms 2 homohexamers on either side of HJ DNA bound by 1 or 2 RuvA tetramers; 4 subunits per hexamer contact DNA at a time. Coordinated motions by a converter formed by DNA-disengaged RuvB subunits stimulates ATP hydrolysis and nucleotide exchange. Immobilization of the converter enables RuvB to convert the ATP-contained energy into a lever motion, pulling 2 nucleotides of DNA out of the RuvA tetramer per ATP hydrolyzed, thus driving DNA branch migration. The RuvB motors rotate together with the DNA substrate, which together with the progressing nucleotide cycle form the mechanistic basis for DNA recombination by continuous HJ branch migration. Branch migration allows RuvC to scan DNA until it finds its consensus sequence, where it cleaves and resolves cruciform DNA.</text>
</comment>
<comment type="catalytic activity">
    <reaction evidence="1">
        <text>ATP + H2O = ADP + phosphate + H(+)</text>
        <dbReference type="Rhea" id="RHEA:13065"/>
        <dbReference type="ChEBI" id="CHEBI:15377"/>
        <dbReference type="ChEBI" id="CHEBI:15378"/>
        <dbReference type="ChEBI" id="CHEBI:30616"/>
        <dbReference type="ChEBI" id="CHEBI:43474"/>
        <dbReference type="ChEBI" id="CHEBI:456216"/>
    </reaction>
</comment>
<comment type="subunit">
    <text evidence="1">Homohexamer. Forms an RuvA(8)-RuvB(12)-Holliday junction (HJ) complex. HJ DNA is sandwiched between 2 RuvA tetramers; dsDNA enters through RuvA and exits via RuvB. An RuvB hexamer assembles on each DNA strand where it exits the tetramer. Each RuvB hexamer is contacted by two RuvA subunits (via domain III) on 2 adjacent RuvB subunits; this complex drives branch migration. In the full resolvosome a probable DNA-RuvA(4)-RuvB(12)-RuvC(2) complex forms which resolves the HJ.</text>
</comment>
<comment type="subcellular location">
    <subcellularLocation>
        <location evidence="1">Cytoplasm</location>
    </subcellularLocation>
</comment>
<comment type="domain">
    <text evidence="1">Has 3 domains, the large (RuvB-L) and small ATPase (RuvB-S) domains and the C-terminal head (RuvB-H) domain. The head domain binds DNA, while the ATPase domains jointly bind ATP, ADP or are empty depending on the state of the subunit in the translocation cycle. During a single DNA translocation step the structure of each domain remains the same, but their relative positions change.</text>
</comment>
<comment type="similarity">
    <text evidence="1">Belongs to the RuvB family.</text>
</comment>
<gene>
    <name evidence="1" type="primary">ruvB</name>
    <name type="ordered locus">Gmet_0746</name>
</gene>
<reference key="1">
    <citation type="journal article" date="2009" name="BMC Microbiol.">
        <title>The genome sequence of Geobacter metallireducens: features of metabolism, physiology and regulation common and dissimilar to Geobacter sulfurreducens.</title>
        <authorList>
            <person name="Aklujkar M."/>
            <person name="Krushkal J."/>
            <person name="DiBartolo G."/>
            <person name="Lapidus A."/>
            <person name="Land M.L."/>
            <person name="Lovley D.R."/>
        </authorList>
    </citation>
    <scope>NUCLEOTIDE SEQUENCE [LARGE SCALE GENOMIC DNA]</scope>
    <source>
        <strain>ATCC 53774 / DSM 7210 / GS-15</strain>
    </source>
</reference>
<evidence type="ECO:0000255" key="1">
    <source>
        <dbReference type="HAMAP-Rule" id="MF_00016"/>
    </source>
</evidence>
<proteinExistence type="inferred from homology"/>
<organism>
    <name type="scientific">Geobacter metallireducens (strain ATCC 53774 / DSM 7210 / GS-15)</name>
    <dbReference type="NCBI Taxonomy" id="269799"/>
    <lineage>
        <taxon>Bacteria</taxon>
        <taxon>Pseudomonadati</taxon>
        <taxon>Thermodesulfobacteriota</taxon>
        <taxon>Desulfuromonadia</taxon>
        <taxon>Geobacterales</taxon>
        <taxon>Geobacteraceae</taxon>
        <taxon>Geobacter</taxon>
    </lineage>
</organism>
<accession>Q39XN6</accession>
<feature type="chain" id="PRO_0000235371" description="Holliday junction branch migration complex subunit RuvB">
    <location>
        <begin position="1"/>
        <end position="338"/>
    </location>
</feature>
<feature type="region of interest" description="Large ATPase domain (RuvB-L)" evidence="1">
    <location>
        <begin position="1"/>
        <end position="180"/>
    </location>
</feature>
<feature type="region of interest" description="Small ATPAse domain (RuvB-S)" evidence="1">
    <location>
        <begin position="181"/>
        <end position="251"/>
    </location>
</feature>
<feature type="region of interest" description="Head domain (RuvB-H)" evidence="1">
    <location>
        <begin position="254"/>
        <end position="338"/>
    </location>
</feature>
<feature type="binding site" evidence="1">
    <location>
        <position position="19"/>
    </location>
    <ligand>
        <name>ATP</name>
        <dbReference type="ChEBI" id="CHEBI:30616"/>
    </ligand>
</feature>
<feature type="binding site" evidence="1">
    <location>
        <position position="20"/>
    </location>
    <ligand>
        <name>ATP</name>
        <dbReference type="ChEBI" id="CHEBI:30616"/>
    </ligand>
</feature>
<feature type="binding site" evidence="1">
    <location>
        <position position="61"/>
    </location>
    <ligand>
        <name>ATP</name>
        <dbReference type="ChEBI" id="CHEBI:30616"/>
    </ligand>
</feature>
<feature type="binding site" evidence="1">
    <location>
        <position position="64"/>
    </location>
    <ligand>
        <name>ATP</name>
        <dbReference type="ChEBI" id="CHEBI:30616"/>
    </ligand>
</feature>
<feature type="binding site" evidence="1">
    <location>
        <position position="65"/>
    </location>
    <ligand>
        <name>ATP</name>
        <dbReference type="ChEBI" id="CHEBI:30616"/>
    </ligand>
</feature>
<feature type="binding site" evidence="1">
    <location>
        <position position="65"/>
    </location>
    <ligand>
        <name>Mg(2+)</name>
        <dbReference type="ChEBI" id="CHEBI:18420"/>
    </ligand>
</feature>
<feature type="binding site" evidence="1">
    <location>
        <position position="66"/>
    </location>
    <ligand>
        <name>ATP</name>
        <dbReference type="ChEBI" id="CHEBI:30616"/>
    </ligand>
</feature>
<feature type="binding site" evidence="1">
    <location>
        <begin position="127"/>
        <end position="129"/>
    </location>
    <ligand>
        <name>ATP</name>
        <dbReference type="ChEBI" id="CHEBI:30616"/>
    </ligand>
</feature>
<feature type="binding site" evidence="1">
    <location>
        <position position="170"/>
    </location>
    <ligand>
        <name>ATP</name>
        <dbReference type="ChEBI" id="CHEBI:30616"/>
    </ligand>
</feature>
<feature type="binding site" evidence="1">
    <location>
        <position position="180"/>
    </location>
    <ligand>
        <name>ATP</name>
        <dbReference type="ChEBI" id="CHEBI:30616"/>
    </ligand>
</feature>
<feature type="binding site" evidence="1">
    <location>
        <position position="217"/>
    </location>
    <ligand>
        <name>ATP</name>
        <dbReference type="ChEBI" id="CHEBI:30616"/>
    </ligand>
</feature>
<feature type="binding site" evidence="1">
    <location>
        <position position="290"/>
    </location>
    <ligand>
        <name>DNA</name>
        <dbReference type="ChEBI" id="CHEBI:16991"/>
    </ligand>
</feature>
<feature type="binding site" evidence="1">
    <location>
        <position position="309"/>
    </location>
    <ligand>
        <name>DNA</name>
        <dbReference type="ChEBI" id="CHEBI:16991"/>
    </ligand>
</feature>
<feature type="binding site" evidence="1">
    <location>
        <position position="314"/>
    </location>
    <ligand>
        <name>DNA</name>
        <dbReference type="ChEBI" id="CHEBI:16991"/>
    </ligand>
</feature>
<name>RUVB_GEOMG</name>
<keyword id="KW-0067">ATP-binding</keyword>
<keyword id="KW-0963">Cytoplasm</keyword>
<keyword id="KW-0227">DNA damage</keyword>
<keyword id="KW-0233">DNA recombination</keyword>
<keyword id="KW-0234">DNA repair</keyword>
<keyword id="KW-0238">DNA-binding</keyword>
<keyword id="KW-0378">Hydrolase</keyword>
<keyword id="KW-0547">Nucleotide-binding</keyword>
<keyword id="KW-1185">Reference proteome</keyword>
<protein>
    <recommendedName>
        <fullName evidence="1">Holliday junction branch migration complex subunit RuvB</fullName>
        <ecNumber evidence="1">3.6.4.-</ecNumber>
    </recommendedName>
</protein>
<sequence>MTRLVTPDITEDDLIESSLRPRALDDYIGQEKAKGNLRVFIDAARKRGEALDHVLLYGPPGLGKTTLANIIACEMGVNIKSTSGPVIERPGDLAAILTNLEPHDVLFIDEIHRLSHVVEEILYPAMEDYQLDIIIGQGPSARTIKLDLPKFTLVGATTRAGLLSSPLRDRFGVISRLEFYTDDELTTIVTRSARILNIGIEPEGGRELARRSRGTPRIANRLLRRVRDFAQVRADGVITAPVVDESLKLLEIDEKGFDHMDRTIMLTIIDKFGGGPVGLDTIAAAIGEERDTIEDVYEPFLIQHGFINRTPRGRVATRAAYEHFGRIAPPSSSQGNLF</sequence>
<dbReference type="EC" id="3.6.4.-" evidence="1"/>
<dbReference type="EMBL" id="CP000148">
    <property type="protein sequence ID" value="ABB30988.1"/>
    <property type="molecule type" value="Genomic_DNA"/>
</dbReference>
<dbReference type="RefSeq" id="WP_004514463.1">
    <property type="nucleotide sequence ID" value="NC_007517.1"/>
</dbReference>
<dbReference type="SMR" id="Q39XN6"/>
<dbReference type="STRING" id="269799.Gmet_0746"/>
<dbReference type="KEGG" id="gme:Gmet_0746"/>
<dbReference type="eggNOG" id="COG2255">
    <property type="taxonomic scope" value="Bacteria"/>
</dbReference>
<dbReference type="HOGENOM" id="CLU_055599_1_0_7"/>
<dbReference type="Proteomes" id="UP000007073">
    <property type="component" value="Chromosome"/>
</dbReference>
<dbReference type="GO" id="GO:0005737">
    <property type="term" value="C:cytoplasm"/>
    <property type="evidence" value="ECO:0007669"/>
    <property type="project" value="UniProtKB-SubCell"/>
</dbReference>
<dbReference type="GO" id="GO:0048476">
    <property type="term" value="C:Holliday junction resolvase complex"/>
    <property type="evidence" value="ECO:0007669"/>
    <property type="project" value="UniProtKB-UniRule"/>
</dbReference>
<dbReference type="GO" id="GO:0005524">
    <property type="term" value="F:ATP binding"/>
    <property type="evidence" value="ECO:0007669"/>
    <property type="project" value="UniProtKB-UniRule"/>
</dbReference>
<dbReference type="GO" id="GO:0016887">
    <property type="term" value="F:ATP hydrolysis activity"/>
    <property type="evidence" value="ECO:0007669"/>
    <property type="project" value="InterPro"/>
</dbReference>
<dbReference type="GO" id="GO:0000400">
    <property type="term" value="F:four-way junction DNA binding"/>
    <property type="evidence" value="ECO:0007669"/>
    <property type="project" value="UniProtKB-UniRule"/>
</dbReference>
<dbReference type="GO" id="GO:0009378">
    <property type="term" value="F:four-way junction helicase activity"/>
    <property type="evidence" value="ECO:0007669"/>
    <property type="project" value="InterPro"/>
</dbReference>
<dbReference type="GO" id="GO:0006310">
    <property type="term" value="P:DNA recombination"/>
    <property type="evidence" value="ECO:0007669"/>
    <property type="project" value="UniProtKB-UniRule"/>
</dbReference>
<dbReference type="GO" id="GO:0006281">
    <property type="term" value="P:DNA repair"/>
    <property type="evidence" value="ECO:0007669"/>
    <property type="project" value="UniProtKB-UniRule"/>
</dbReference>
<dbReference type="CDD" id="cd00009">
    <property type="entry name" value="AAA"/>
    <property type="match status" value="1"/>
</dbReference>
<dbReference type="FunFam" id="1.10.10.10:FF:000086">
    <property type="entry name" value="Holliday junction ATP-dependent DNA helicase RuvB"/>
    <property type="match status" value="1"/>
</dbReference>
<dbReference type="FunFam" id="3.40.50.300:FF:000073">
    <property type="entry name" value="Holliday junction ATP-dependent DNA helicase RuvB"/>
    <property type="match status" value="1"/>
</dbReference>
<dbReference type="Gene3D" id="1.10.8.60">
    <property type="match status" value="1"/>
</dbReference>
<dbReference type="Gene3D" id="3.40.50.300">
    <property type="entry name" value="P-loop containing nucleotide triphosphate hydrolases"/>
    <property type="match status" value="1"/>
</dbReference>
<dbReference type="Gene3D" id="1.10.10.10">
    <property type="entry name" value="Winged helix-like DNA-binding domain superfamily/Winged helix DNA-binding domain"/>
    <property type="match status" value="1"/>
</dbReference>
<dbReference type="HAMAP" id="MF_00016">
    <property type="entry name" value="DNA_HJ_migration_RuvB"/>
    <property type="match status" value="1"/>
</dbReference>
<dbReference type="InterPro" id="IPR003593">
    <property type="entry name" value="AAA+_ATPase"/>
</dbReference>
<dbReference type="InterPro" id="IPR041445">
    <property type="entry name" value="AAA_lid_4"/>
</dbReference>
<dbReference type="InterPro" id="IPR004605">
    <property type="entry name" value="DNA_helicase_Holl-junc_RuvB"/>
</dbReference>
<dbReference type="InterPro" id="IPR027417">
    <property type="entry name" value="P-loop_NTPase"/>
</dbReference>
<dbReference type="InterPro" id="IPR008824">
    <property type="entry name" value="RuvB-like_N"/>
</dbReference>
<dbReference type="InterPro" id="IPR008823">
    <property type="entry name" value="RuvB_C"/>
</dbReference>
<dbReference type="InterPro" id="IPR036388">
    <property type="entry name" value="WH-like_DNA-bd_sf"/>
</dbReference>
<dbReference type="InterPro" id="IPR036390">
    <property type="entry name" value="WH_DNA-bd_sf"/>
</dbReference>
<dbReference type="NCBIfam" id="NF000868">
    <property type="entry name" value="PRK00080.1"/>
    <property type="match status" value="1"/>
</dbReference>
<dbReference type="NCBIfam" id="TIGR00635">
    <property type="entry name" value="ruvB"/>
    <property type="match status" value="1"/>
</dbReference>
<dbReference type="PANTHER" id="PTHR42848">
    <property type="match status" value="1"/>
</dbReference>
<dbReference type="PANTHER" id="PTHR42848:SF1">
    <property type="entry name" value="HOLLIDAY JUNCTION BRANCH MIGRATION COMPLEX SUBUNIT RUVB"/>
    <property type="match status" value="1"/>
</dbReference>
<dbReference type="Pfam" id="PF17864">
    <property type="entry name" value="AAA_lid_4"/>
    <property type="match status" value="1"/>
</dbReference>
<dbReference type="Pfam" id="PF05491">
    <property type="entry name" value="RuvB_C"/>
    <property type="match status" value="1"/>
</dbReference>
<dbReference type="Pfam" id="PF05496">
    <property type="entry name" value="RuvB_N"/>
    <property type="match status" value="1"/>
</dbReference>
<dbReference type="SMART" id="SM00382">
    <property type="entry name" value="AAA"/>
    <property type="match status" value="1"/>
</dbReference>
<dbReference type="SUPFAM" id="SSF52540">
    <property type="entry name" value="P-loop containing nucleoside triphosphate hydrolases"/>
    <property type="match status" value="1"/>
</dbReference>
<dbReference type="SUPFAM" id="SSF46785">
    <property type="entry name" value="Winged helix' DNA-binding domain"/>
    <property type="match status" value="1"/>
</dbReference>